<name>DAXX_DROME</name>
<keyword id="KW-0053">Apoptosis</keyword>
<keyword id="KW-0143">Chaperone</keyword>
<keyword id="KW-0158">Chromosome</keyword>
<keyword id="KW-0175">Coiled coil</keyword>
<keyword id="KW-0963">Cytoplasm</keyword>
<keyword id="KW-0539">Nucleus</keyword>
<keyword id="KW-1185">Reference proteome</keyword>
<comment type="function">
    <text evidence="3 4 5">Transcription regulator (PubMed:17933869, PubMed:23593018). Acts as a histone chaperone that facilitates deposition of histone H3.3 (PubMed:28320872). Has a role in chromatin remodeling together with asf1 and XNP (PubMed:28320872). Has role in the transcriptional apoptotic response to oxidative and UV stress (PubMed:17933869, PubMed:23593018).</text>
</comment>
<comment type="subunit">
    <text evidence="3 5">Interacts with p53 (via C-terminus) (PubMed:17933869). Interacts (via C-terminus) with His3.3A and His3.3B (PubMed:28320872). Interacts with asf1 (PubMed:28320872).</text>
</comment>
<comment type="subcellular location">
    <subcellularLocation>
        <location evidence="4">Cytoplasm</location>
        <location evidence="4">Cytosol</location>
    </subcellularLocation>
    <subcellularLocation>
        <location evidence="4">Nucleus</location>
    </subcellularLocation>
    <subcellularLocation>
        <location evidence="5">Chromosome</location>
    </subcellularLocation>
    <text evidence="4 5">Localization to the nucleus is regulated by dj-1beta and oxidative stress (PubMed:23593018). Localizes to pericentric heterochromatin associated with chromosomes X and 4 (PubMed:28320872).</text>
</comment>
<comment type="tissue specificity">
    <text evidence="4 5">Ubiquitously expressed with higher levels in the head (at protein level) (PubMed:23593018). Expressed in the germ line, with prominent expression in primary spermatocytes and meiotic spermatocytes (at protein level) (PubMed:28320872). In ovaries, expressed in nurse cells and in the germinal vesicle of the ovarian follicle at stage 10 (at protein level) (PubMed:28320872).</text>
</comment>
<comment type="developmental stage">
    <text evidence="3">Expressed in all developmental stages (PubMed:17933869). Higher level of expression detected at the end of the third larval stage, in adult females and in early embryos containing maternally deposited transcripts (PubMed:17933869). At later stages of development, specific expression can be detected in tissues containing mitotic cells such as in the brain hemispheres and imaginal disks (PubMed:17933869).</text>
</comment>
<comment type="disruption phenotype">
    <text evidence="4">Reduces longevity and female fertility, but increases resistance to oxidative stress and UV irradiation-induced pupal lethality (PubMed:23593018). Double knockouts for DJ-1beta and Daxx restore normal number of dopaminergic neurons, locomotor activity and sensitivity to oxidative stress and UV-induced damage (PubMed:23593018). RNAi-mediated knockdown results in increased resistance to oxidative stress (PubMed:23593018).</text>
</comment>
<dbReference type="EMBL" id="AE014134">
    <property type="protein sequence ID" value="AAF52390.3"/>
    <property type="molecule type" value="Genomic_DNA"/>
</dbReference>
<dbReference type="EMBL" id="AE014134">
    <property type="protein sequence ID" value="AHN54190.1"/>
    <property type="molecule type" value="Genomic_DNA"/>
</dbReference>
<dbReference type="EMBL" id="BT011329">
    <property type="protein sequence ID" value="AAR96121.1"/>
    <property type="molecule type" value="mRNA"/>
</dbReference>
<dbReference type="RefSeq" id="NP_001285675.1">
    <property type="nucleotide sequence ID" value="NM_001298746.1"/>
</dbReference>
<dbReference type="RefSeq" id="NP_609035.2">
    <property type="nucleotide sequence ID" value="NM_135191.3"/>
</dbReference>
<dbReference type="SMR" id="Q9VMD0"/>
<dbReference type="FunCoup" id="Q9VMD0">
    <property type="interactions" value="600"/>
</dbReference>
<dbReference type="IntAct" id="Q9VMD0">
    <property type="interactions" value="3"/>
</dbReference>
<dbReference type="STRING" id="7227.FBpp0078890"/>
<dbReference type="GlyGen" id="Q9VMD0">
    <property type="glycosylation" value="2 sites"/>
</dbReference>
<dbReference type="PaxDb" id="7227-FBpp0078890"/>
<dbReference type="EnsemblMetazoa" id="FBtr0079260">
    <property type="protein sequence ID" value="FBpp0078890"/>
    <property type="gene ID" value="FBgn0031820"/>
</dbReference>
<dbReference type="EnsemblMetazoa" id="FBtr0344764">
    <property type="protein sequence ID" value="FBpp0311092"/>
    <property type="gene ID" value="FBgn0031820"/>
</dbReference>
<dbReference type="GeneID" id="33906"/>
<dbReference type="KEGG" id="dme:Dmel_CG9537"/>
<dbReference type="UCSC" id="CG9537-RA">
    <property type="organism name" value="d. melanogaster"/>
</dbReference>
<dbReference type="AGR" id="FB:FBgn0031820"/>
<dbReference type="CTD" id="1616"/>
<dbReference type="FlyBase" id="FBgn0031820">
    <property type="gene designation" value="Daxx"/>
</dbReference>
<dbReference type="VEuPathDB" id="VectorBase:FBgn0031820"/>
<dbReference type="eggNOG" id="ENOG502QRS6">
    <property type="taxonomic scope" value="Eukaryota"/>
</dbReference>
<dbReference type="GeneTree" id="ENSGT00390000009448"/>
<dbReference type="HOGENOM" id="CLU_004145_0_0_1"/>
<dbReference type="InParanoid" id="Q9VMD0"/>
<dbReference type="OMA" id="QIPKVFV"/>
<dbReference type="OrthoDB" id="7492809at2759"/>
<dbReference type="PhylomeDB" id="Q9VMD0"/>
<dbReference type="BioGRID-ORCS" id="33906">
    <property type="hits" value="0 hits in 1 CRISPR screen"/>
</dbReference>
<dbReference type="ChiTaRS" id="Daxx">
    <property type="organism name" value="fly"/>
</dbReference>
<dbReference type="GenomeRNAi" id="33906"/>
<dbReference type="PRO" id="PR:Q9VMD0"/>
<dbReference type="Proteomes" id="UP000000803">
    <property type="component" value="Chromosome 2L"/>
</dbReference>
<dbReference type="Bgee" id="FBgn0031820">
    <property type="expression patterns" value="Expressed in spermatocyte in testis and 166 other cell types or tissues"/>
</dbReference>
<dbReference type="ExpressionAtlas" id="Q9VMD0">
    <property type="expression patterns" value="baseline and differential"/>
</dbReference>
<dbReference type="GO" id="GO:0005694">
    <property type="term" value="C:chromosome"/>
    <property type="evidence" value="ECO:0007669"/>
    <property type="project" value="UniProtKB-SubCell"/>
</dbReference>
<dbReference type="GO" id="GO:0005829">
    <property type="term" value="C:cytosol"/>
    <property type="evidence" value="ECO:0000314"/>
    <property type="project" value="UniProtKB"/>
</dbReference>
<dbReference type="GO" id="GO:0005634">
    <property type="term" value="C:nucleus"/>
    <property type="evidence" value="ECO:0000314"/>
    <property type="project" value="UniProtKB"/>
</dbReference>
<dbReference type="GO" id="GO:0042393">
    <property type="term" value="F:histone binding"/>
    <property type="evidence" value="ECO:0007669"/>
    <property type="project" value="InterPro"/>
</dbReference>
<dbReference type="GO" id="GO:0003712">
    <property type="term" value="F:transcription coregulator activity"/>
    <property type="evidence" value="ECO:0000318"/>
    <property type="project" value="GO_Central"/>
</dbReference>
<dbReference type="GO" id="GO:0006915">
    <property type="term" value="P:apoptotic process"/>
    <property type="evidence" value="ECO:0007669"/>
    <property type="project" value="UniProtKB-KW"/>
</dbReference>
<dbReference type="GO" id="GO:0008340">
    <property type="term" value="P:determination of adult lifespan"/>
    <property type="evidence" value="ECO:0000315"/>
    <property type="project" value="FlyBase"/>
</dbReference>
<dbReference type="GO" id="GO:0045893">
    <property type="term" value="P:positive regulation of DNA-templated transcription"/>
    <property type="evidence" value="ECO:0000315"/>
    <property type="project" value="FlyBase"/>
</dbReference>
<dbReference type="GO" id="GO:0042981">
    <property type="term" value="P:regulation of apoptotic process"/>
    <property type="evidence" value="ECO:0000316"/>
    <property type="project" value="FlyBase"/>
</dbReference>
<dbReference type="GO" id="GO:0006355">
    <property type="term" value="P:regulation of DNA-templated transcription"/>
    <property type="evidence" value="ECO:0000318"/>
    <property type="project" value="GO_Central"/>
</dbReference>
<dbReference type="GO" id="GO:0006979">
    <property type="term" value="P:response to oxidative stress"/>
    <property type="evidence" value="ECO:0000315"/>
    <property type="project" value="FlyBase"/>
</dbReference>
<dbReference type="CDD" id="cd13150">
    <property type="entry name" value="DAXX_histone_binding"/>
    <property type="match status" value="1"/>
</dbReference>
<dbReference type="FunFam" id="1.20.58.2170:FF:000001">
    <property type="entry name" value="Death domain-associated protein 6"/>
    <property type="match status" value="1"/>
</dbReference>
<dbReference type="Gene3D" id="1.20.58.2170">
    <property type="match status" value="1"/>
</dbReference>
<dbReference type="Gene3D" id="1.10.8.810">
    <property type="entry name" value="Daxx helical bundle domain"/>
    <property type="match status" value="1"/>
</dbReference>
<dbReference type="InterPro" id="IPR046378">
    <property type="entry name" value="DAXX_histone-bd"/>
</dbReference>
<dbReference type="InterPro" id="IPR046426">
    <property type="entry name" value="DAXX_histone-bd_sf"/>
</dbReference>
<dbReference type="InterPro" id="IPR038298">
    <property type="entry name" value="Daxx_N_sf"/>
</dbReference>
<dbReference type="PANTHER" id="PTHR12766:SF10">
    <property type="entry name" value="DAXX-LIKE PROTEIN"/>
    <property type="match status" value="1"/>
</dbReference>
<dbReference type="PANTHER" id="PTHR12766">
    <property type="entry name" value="DEATH DOMAIN-ASSOCIATED PROTEIN 6 DAXX"/>
    <property type="match status" value="1"/>
</dbReference>
<dbReference type="Pfam" id="PF20920">
    <property type="entry name" value="DAXX_hist_bd"/>
    <property type="match status" value="1"/>
</dbReference>
<reference evidence="10" key="1">
    <citation type="journal article" date="2000" name="Science">
        <title>The genome sequence of Drosophila melanogaster.</title>
        <authorList>
            <person name="Adams M.D."/>
            <person name="Celniker S.E."/>
            <person name="Holt R.A."/>
            <person name="Evans C.A."/>
            <person name="Gocayne J.D."/>
            <person name="Amanatides P.G."/>
            <person name="Scherer S.E."/>
            <person name="Li P.W."/>
            <person name="Hoskins R.A."/>
            <person name="Galle R.F."/>
            <person name="George R.A."/>
            <person name="Lewis S.E."/>
            <person name="Richards S."/>
            <person name="Ashburner M."/>
            <person name="Henderson S.N."/>
            <person name="Sutton G.G."/>
            <person name="Wortman J.R."/>
            <person name="Yandell M.D."/>
            <person name="Zhang Q."/>
            <person name="Chen L.X."/>
            <person name="Brandon R.C."/>
            <person name="Rogers Y.-H.C."/>
            <person name="Blazej R.G."/>
            <person name="Champe M."/>
            <person name="Pfeiffer B.D."/>
            <person name="Wan K.H."/>
            <person name="Doyle C."/>
            <person name="Baxter E.G."/>
            <person name="Helt G."/>
            <person name="Nelson C.R."/>
            <person name="Miklos G.L.G."/>
            <person name="Abril J.F."/>
            <person name="Agbayani A."/>
            <person name="An H.-J."/>
            <person name="Andrews-Pfannkoch C."/>
            <person name="Baldwin D."/>
            <person name="Ballew R.M."/>
            <person name="Basu A."/>
            <person name="Baxendale J."/>
            <person name="Bayraktaroglu L."/>
            <person name="Beasley E.M."/>
            <person name="Beeson K.Y."/>
            <person name="Benos P.V."/>
            <person name="Berman B.P."/>
            <person name="Bhandari D."/>
            <person name="Bolshakov S."/>
            <person name="Borkova D."/>
            <person name="Botchan M.R."/>
            <person name="Bouck J."/>
            <person name="Brokstein P."/>
            <person name="Brottier P."/>
            <person name="Burtis K.C."/>
            <person name="Busam D.A."/>
            <person name="Butler H."/>
            <person name="Cadieu E."/>
            <person name="Center A."/>
            <person name="Chandra I."/>
            <person name="Cherry J.M."/>
            <person name="Cawley S."/>
            <person name="Dahlke C."/>
            <person name="Davenport L.B."/>
            <person name="Davies P."/>
            <person name="de Pablos B."/>
            <person name="Delcher A."/>
            <person name="Deng Z."/>
            <person name="Mays A.D."/>
            <person name="Dew I."/>
            <person name="Dietz S.M."/>
            <person name="Dodson K."/>
            <person name="Doup L.E."/>
            <person name="Downes M."/>
            <person name="Dugan-Rocha S."/>
            <person name="Dunkov B.C."/>
            <person name="Dunn P."/>
            <person name="Durbin K.J."/>
            <person name="Evangelista C.C."/>
            <person name="Ferraz C."/>
            <person name="Ferriera S."/>
            <person name="Fleischmann W."/>
            <person name="Fosler C."/>
            <person name="Gabrielian A.E."/>
            <person name="Garg N.S."/>
            <person name="Gelbart W.M."/>
            <person name="Glasser K."/>
            <person name="Glodek A."/>
            <person name="Gong F."/>
            <person name="Gorrell J.H."/>
            <person name="Gu Z."/>
            <person name="Guan P."/>
            <person name="Harris M."/>
            <person name="Harris N.L."/>
            <person name="Harvey D.A."/>
            <person name="Heiman T.J."/>
            <person name="Hernandez J.R."/>
            <person name="Houck J."/>
            <person name="Hostin D."/>
            <person name="Houston K.A."/>
            <person name="Howland T.J."/>
            <person name="Wei M.-H."/>
            <person name="Ibegwam C."/>
            <person name="Jalali M."/>
            <person name="Kalush F."/>
            <person name="Karpen G.H."/>
            <person name="Ke Z."/>
            <person name="Kennison J.A."/>
            <person name="Ketchum K.A."/>
            <person name="Kimmel B.E."/>
            <person name="Kodira C.D."/>
            <person name="Kraft C.L."/>
            <person name="Kravitz S."/>
            <person name="Kulp D."/>
            <person name="Lai Z."/>
            <person name="Lasko P."/>
            <person name="Lei Y."/>
            <person name="Levitsky A.A."/>
            <person name="Li J.H."/>
            <person name="Li Z."/>
            <person name="Liang Y."/>
            <person name="Lin X."/>
            <person name="Liu X."/>
            <person name="Mattei B."/>
            <person name="McIntosh T.C."/>
            <person name="McLeod M.P."/>
            <person name="McPherson D."/>
            <person name="Merkulov G."/>
            <person name="Milshina N.V."/>
            <person name="Mobarry C."/>
            <person name="Morris J."/>
            <person name="Moshrefi A."/>
            <person name="Mount S.M."/>
            <person name="Moy M."/>
            <person name="Murphy B."/>
            <person name="Murphy L."/>
            <person name="Muzny D.M."/>
            <person name="Nelson D.L."/>
            <person name="Nelson D.R."/>
            <person name="Nelson K.A."/>
            <person name="Nixon K."/>
            <person name="Nusskern D.R."/>
            <person name="Pacleb J.M."/>
            <person name="Palazzolo M."/>
            <person name="Pittman G.S."/>
            <person name="Pan S."/>
            <person name="Pollard J."/>
            <person name="Puri V."/>
            <person name="Reese M.G."/>
            <person name="Reinert K."/>
            <person name="Remington K."/>
            <person name="Saunders R.D.C."/>
            <person name="Scheeler F."/>
            <person name="Shen H."/>
            <person name="Shue B.C."/>
            <person name="Siden-Kiamos I."/>
            <person name="Simpson M."/>
            <person name="Skupski M.P."/>
            <person name="Smith T.J."/>
            <person name="Spier E."/>
            <person name="Spradling A.C."/>
            <person name="Stapleton M."/>
            <person name="Strong R."/>
            <person name="Sun E."/>
            <person name="Svirskas R."/>
            <person name="Tector C."/>
            <person name="Turner R."/>
            <person name="Venter E."/>
            <person name="Wang A.H."/>
            <person name="Wang X."/>
            <person name="Wang Z.-Y."/>
            <person name="Wassarman D.A."/>
            <person name="Weinstock G.M."/>
            <person name="Weissenbach J."/>
            <person name="Williams S.M."/>
            <person name="Woodage T."/>
            <person name="Worley K.C."/>
            <person name="Wu D."/>
            <person name="Yang S."/>
            <person name="Yao Q.A."/>
            <person name="Ye J."/>
            <person name="Yeh R.-F."/>
            <person name="Zaveri J.S."/>
            <person name="Zhan M."/>
            <person name="Zhang G."/>
            <person name="Zhao Q."/>
            <person name="Zheng L."/>
            <person name="Zheng X.H."/>
            <person name="Zhong F.N."/>
            <person name="Zhong W."/>
            <person name="Zhou X."/>
            <person name="Zhu S.C."/>
            <person name="Zhu X."/>
            <person name="Smith H.O."/>
            <person name="Gibbs R.A."/>
            <person name="Myers E.W."/>
            <person name="Rubin G.M."/>
            <person name="Venter J.C."/>
        </authorList>
    </citation>
    <scope>NUCLEOTIDE SEQUENCE [LARGE SCALE GENOMIC DNA]</scope>
    <source>
        <strain evidence="10">Berkeley</strain>
    </source>
</reference>
<reference evidence="10" key="2">
    <citation type="journal article" date="2002" name="Genome Biol.">
        <title>Annotation of the Drosophila melanogaster euchromatic genome: a systematic review.</title>
        <authorList>
            <person name="Misra S."/>
            <person name="Crosby M.A."/>
            <person name="Mungall C.J."/>
            <person name="Matthews B.B."/>
            <person name="Campbell K.S."/>
            <person name="Hradecky P."/>
            <person name="Huang Y."/>
            <person name="Kaminker J.S."/>
            <person name="Millburn G.H."/>
            <person name="Prochnik S.E."/>
            <person name="Smith C.D."/>
            <person name="Tupy J.L."/>
            <person name="Whitfield E.J."/>
            <person name="Bayraktaroglu L."/>
            <person name="Berman B.P."/>
            <person name="Bettencourt B.R."/>
            <person name="Celniker S.E."/>
            <person name="de Grey A.D.N.J."/>
            <person name="Drysdale R.A."/>
            <person name="Harris N.L."/>
            <person name="Richter J."/>
            <person name="Russo S."/>
            <person name="Schroeder A.J."/>
            <person name="Shu S.Q."/>
            <person name="Stapleton M."/>
            <person name="Yamada C."/>
            <person name="Ashburner M."/>
            <person name="Gelbart W.M."/>
            <person name="Rubin G.M."/>
            <person name="Lewis S.E."/>
        </authorList>
    </citation>
    <scope>GENOME REANNOTATION</scope>
    <source>
        <strain evidence="10">Berkeley</strain>
    </source>
</reference>
<reference evidence="8" key="3">
    <citation type="submission" date="2004-01" db="EMBL/GenBank/DDBJ databases">
        <authorList>
            <person name="Stapleton M."/>
            <person name="Carlson J."/>
            <person name="Chavez C."/>
            <person name="Frise E."/>
            <person name="George R."/>
            <person name="Pacleb J."/>
            <person name="Park S."/>
            <person name="Wan K."/>
            <person name="Yu C."/>
            <person name="Rubin G.M."/>
            <person name="Celniker S."/>
        </authorList>
    </citation>
    <scope>NUCLEOTIDE SEQUENCE [LARGE SCALE GENOMIC DNA]</scope>
    <source>
        <strain evidence="8">Berkeley</strain>
        <tissue evidence="8">Embryo</tissue>
    </source>
</reference>
<reference evidence="7" key="4">
    <citation type="journal article" date="2007" name="J. Biol. Chem.">
        <title>Daxx-like protein of Drosophila interacts with Dmp53 and affects longevity and Ark mRNA level.</title>
        <authorList>
            <person name="Bodai L."/>
            <person name="Pardi N."/>
            <person name="Ujfaludi Z."/>
            <person name="Bereczki O."/>
            <person name="Komonyi O."/>
            <person name="Balint E."/>
            <person name="Boros I.M."/>
        </authorList>
    </citation>
    <scope>FUNCTION</scope>
    <scope>INTERACTION WITH P53</scope>
    <scope>DEVELOPMENTAL STAGE</scope>
    <scope>DISRUPTION PHENOTYPE</scope>
</reference>
<reference evidence="7" key="5">
    <citation type="journal article" date="2013" name="PLoS Genet.">
        <title>Drosophila DJ-1 decreases neural sensitivity to stress by negatively regulating Daxx-like protein through dFOXO.</title>
        <authorList>
            <person name="Hwang S."/>
            <person name="Song S."/>
            <person name="Hong Y.K."/>
            <person name="Choi G."/>
            <person name="Suh Y.S."/>
            <person name="Han S.Y."/>
            <person name="Lee M."/>
            <person name="Park S.H."/>
            <person name="Lee J.H."/>
            <person name="Lee S."/>
            <person name="Bang S.M."/>
            <person name="Jeong Y."/>
            <person name="Chung W.J."/>
            <person name="Lee I.S."/>
            <person name="Jeong G."/>
            <person name="Chung J."/>
            <person name="Cho K.S."/>
        </authorList>
    </citation>
    <scope>FUNCTION</scope>
    <scope>SUBCELLULAR LOCATION</scope>
    <scope>TISSUE SPECIFICITY</scope>
    <scope>DISRUPTION PHENOTYPE</scope>
</reference>
<reference evidence="7" key="6">
    <citation type="journal article" date="2017" name="Mol. Cell. Biol.">
        <title>The Drosophila DAXX-Like Protein (DLP) Cooperates with ASF1 for H3.3 Deposition and Heterochromatin Formation.</title>
        <authorList>
            <person name="Fromental-Ramain C."/>
            <person name="Ramain P."/>
            <person name="Hamiche A."/>
        </authorList>
    </citation>
    <scope>FUNCTION</scope>
    <scope>INTERACTION WITH HIS3.3A; HIS3.3B AND ASF1</scope>
    <scope>SUBCELLULAR LOCATION</scope>
    <scope>TISSUE SPECIFICITY</scope>
</reference>
<sequence length="1659" mass="183875">MSASVICVDLSSESDEESPAKRRRLEDPLRLLTPSGRQSFPAKLLNIPKASLGSAMVVPVAETGPARETPVIVDPLRSMHIPSGITITKHQKNVLATNGNMNLSLAESNNNNNTTSLNKNVTPKQINVGTGQKVAWSVSSKAPSPNAVITTVPSHQVRVTPFNPIRLAPGSKIIPASNAMPAKIQPILGMGQPQQQAQAQQPKAIIVGFPKPNTAVAQMAQHQKPLTLQIHQKLIAGQQQHIASISQLQQVSLQQQQPLRPVSIQLQQQQNQRNGSLPGKQQKPLECPVPAQQEKLPRGPLPTKPAEPLSGPLPTEPDEPLGGPLPTRPKPPVRSLQQPVNKNTAIGVQIQQSQEPLGGTLPTRQKPLGGQLLTQQKPPVGSIQQSVKQNTGIGVQIQQIPKVVVGQQPQKVYLNKLQQEQQKIFLGHLQQQQQKTFLGQLQQEQQKILGQLQQQKQQQQQQQKKILGQSQQQKVPLGQPQPQQKLPQQLNNSLVQLQQQHQQRTSVGQLQQQQPHQSQQKNSMVHVKQQPQQQKKISVGQFQQQPQQQQKTSVAQLQQQPQQQQKISVGQLQQQSQQQQKPSVGQLQQQSQQQQTPLVGQLQRQTQQQQKTSAGQFQQQPQQQQKISAGQLQEHSQQQQKTLAGQLQQQAQQQLNTSAGQLQQQQKPPKASLAQQAAAQKQGAGLGQQQQFQSQPQQRTSAGLLQQQQMPQKKIVMQPQLPKTSVVLPRPQQLPKNPLLVAQQQSPKTPLVNSVMGPQFPSQQPSLPVVNQITHKSMTIQRLPMLQTVQKILPKQIAPQQTPPPAHIVQKQTMPNAAMQNPPFAHRPPIVRPMTVAKISPVPTNNKVCIPMKPQMASYVSPTDPTMTAARTLPFRSSQRKTSEAPMTSTHVQGFTASATPPQRLLATPPHCAAALNEPLLLNLPPTTSITPQLTPTTTPPPAGPSAAVQQQQLAKAAAIKLNSLPEASISPVNRSPTASAKRIQPITVLKKSDEEWQRHLEQQQQKKHVQLQSSSMTTIVLVESPPTTPPTDKPEPERGPMTVEKSSIKPMATDKQSRAIKRPAVMISTKKSGLVVTEIVDLDEIPDIPPEKRGKECFPPIKNAAKAAPSVNAPFTTEYAALLRLCREVDKSTHMERLVKGELTQYYYSAPESFVMSCGFRNLVTMAMARIRSESYLVYVHLKYVLDELASRRLTKMFPTVRAIPPASQFPLPPASQFPLPPTLTTPKQPAIVKAPGQQTVMAGREQDDEVEEVTLVNVGTVSCEERRRDERIRHFYRTLHAITKRIKMLEEAEVDLNDEDSSYLQLERFKKRACQIYEKICDLKGESKSVRRQLKKPIHFKDSDYPHFNNSLSAFVNRMQDFPDYHDVLQILEKCNKEKELGLAKYEMKRIAYDAFNKVGRMLQSRRKNDLYETVTHYTANGKDPASSDPELLAKLKENNKKQTKISDILEKYALEQDLNAEERQEARLKEKKLKQVKADEEAAKLAALAEDDDKPCTSAQAAAKAAALAALKRGPAARGNVIRKKRAANGRIFKIADDGDDSEEESDSEDDDVEEFVNNFQANSDVSDADSEVEAVTSPKRDALPLAEEEDVIDITRDETGKKNDEGTPNGRLKIMSVSSLNANFVHGQDLHRKPNPMPSAKPVIADQIIISDEES</sequence>
<protein>
    <recommendedName>
        <fullName evidence="6">Daxx-like protein</fullName>
        <shortName evidence="6">DLP</shortName>
    </recommendedName>
</protein>
<evidence type="ECO:0000255" key="1"/>
<evidence type="ECO:0000256" key="2">
    <source>
        <dbReference type="SAM" id="MobiDB-lite"/>
    </source>
</evidence>
<evidence type="ECO:0000269" key="3">
    <source>
    </source>
</evidence>
<evidence type="ECO:0000269" key="4">
    <source>
    </source>
</evidence>
<evidence type="ECO:0000269" key="5">
    <source>
    </source>
</evidence>
<evidence type="ECO:0000303" key="6">
    <source>
    </source>
</evidence>
<evidence type="ECO:0000305" key="7"/>
<evidence type="ECO:0000312" key="8">
    <source>
        <dbReference type="EMBL" id="AAR96121.1"/>
    </source>
</evidence>
<evidence type="ECO:0000312" key="9">
    <source>
        <dbReference type="FlyBase" id="FBgn0031820"/>
    </source>
</evidence>
<evidence type="ECO:0000312" key="10">
    <source>
        <dbReference type="Proteomes" id="UP000000803"/>
    </source>
</evidence>
<feature type="chain" id="PRO_0000447643" description="Daxx-like protein">
    <location>
        <begin position="1"/>
        <end position="1659"/>
    </location>
</feature>
<feature type="region of interest" description="Disordered" evidence="2">
    <location>
        <begin position="1"/>
        <end position="25"/>
    </location>
</feature>
<feature type="region of interest" description="Disordered" evidence="2">
    <location>
        <begin position="265"/>
        <end position="336"/>
    </location>
</feature>
<feature type="region of interest" description="Disordered" evidence="2">
    <location>
        <begin position="506"/>
        <end position="542"/>
    </location>
</feature>
<feature type="region of interest" description="Disordered" evidence="2">
    <location>
        <begin position="600"/>
        <end position="645"/>
    </location>
</feature>
<feature type="region of interest" description="Disordered" evidence="2">
    <location>
        <begin position="658"/>
        <end position="713"/>
    </location>
</feature>
<feature type="region of interest" description="Necessary for interaction with His3.3A and His3.3B" evidence="5">
    <location>
        <begin position="870"/>
        <end position="1659"/>
    </location>
</feature>
<feature type="region of interest" description="Disordered" evidence="2">
    <location>
        <begin position="872"/>
        <end position="894"/>
    </location>
</feature>
<feature type="region of interest" description="Disordered" evidence="2">
    <location>
        <begin position="924"/>
        <end position="952"/>
    </location>
</feature>
<feature type="region of interest" description="Disordered" evidence="2">
    <location>
        <begin position="1023"/>
        <end position="1060"/>
    </location>
</feature>
<feature type="region of interest" description="Disordered" evidence="2">
    <location>
        <begin position="1536"/>
        <end position="1555"/>
    </location>
</feature>
<feature type="coiled-coil region" evidence="1">
    <location>
        <begin position="438"/>
        <end position="469"/>
    </location>
</feature>
<feature type="compositionally biased region" description="Low complexity" evidence="2">
    <location>
        <begin position="506"/>
        <end position="520"/>
    </location>
</feature>
<feature type="compositionally biased region" description="Low complexity" evidence="2">
    <location>
        <begin position="528"/>
        <end position="542"/>
    </location>
</feature>
<feature type="compositionally biased region" description="Low complexity" evidence="2">
    <location>
        <begin position="600"/>
        <end position="625"/>
    </location>
</feature>
<feature type="compositionally biased region" description="Polar residues" evidence="2">
    <location>
        <begin position="626"/>
        <end position="635"/>
    </location>
</feature>
<feature type="compositionally biased region" description="Low complexity" evidence="2">
    <location>
        <begin position="636"/>
        <end position="645"/>
    </location>
</feature>
<feature type="compositionally biased region" description="Low complexity" evidence="2">
    <location>
        <begin position="658"/>
        <end position="698"/>
    </location>
</feature>
<feature type="compositionally biased region" description="Polar residues" evidence="2">
    <location>
        <begin position="699"/>
        <end position="711"/>
    </location>
</feature>
<feature type="compositionally biased region" description="Polar residues" evidence="2">
    <location>
        <begin position="885"/>
        <end position="894"/>
    </location>
</feature>
<feature type="compositionally biased region" description="Low complexity" evidence="2">
    <location>
        <begin position="924"/>
        <end position="937"/>
    </location>
</feature>
<feature type="compositionally biased region" description="Acidic residues" evidence="2">
    <location>
        <begin position="1541"/>
        <end position="1555"/>
    </location>
</feature>
<feature type="sequence conflict" description="In Ref. 3; AAR96121." evidence="7" ref="3">
    <original>T</original>
    <variation>K</variation>
    <location>
        <position position="596"/>
    </location>
</feature>
<gene>
    <name evidence="9" type="primary">Daxx</name>
    <name evidence="9" type="ORF">CG9537</name>
</gene>
<organism evidence="10">
    <name type="scientific">Drosophila melanogaster</name>
    <name type="common">Fruit fly</name>
    <dbReference type="NCBI Taxonomy" id="7227"/>
    <lineage>
        <taxon>Eukaryota</taxon>
        <taxon>Metazoa</taxon>
        <taxon>Ecdysozoa</taxon>
        <taxon>Arthropoda</taxon>
        <taxon>Hexapoda</taxon>
        <taxon>Insecta</taxon>
        <taxon>Pterygota</taxon>
        <taxon>Neoptera</taxon>
        <taxon>Endopterygota</taxon>
        <taxon>Diptera</taxon>
        <taxon>Brachycera</taxon>
        <taxon>Muscomorpha</taxon>
        <taxon>Ephydroidea</taxon>
        <taxon>Drosophilidae</taxon>
        <taxon>Drosophila</taxon>
        <taxon>Sophophora</taxon>
    </lineage>
</organism>
<accession>Q9VMD0</accession>
<accession>Q6NNF9</accession>
<proteinExistence type="evidence at protein level"/>